<keyword id="KW-0560">Oxidoreductase</keyword>
<keyword id="KW-0819">tRNA processing</keyword>
<name>TRHO_STRZP</name>
<sequence length="328" mass="37879">MAKDIRVLLYYLYTPIENAEQFAADHLAFCKSIGLKGRILVADEGINGTVSGDYETTQKYMDYVHSLPGMEELWFKIDEESEQAFKKMFVRYKKEIVHLGLEDNDFDNDINPLETTGAYLSPKEFKEALLDKDTVVLDTRNDYEYDLGHFRGAIRPDIRNFRELPQWVRDNKEKFMDKRVVVYCTGGVRCEKFSGWMVREGYKDVGQLHGGIATYGKDPEVQGELWDGKMYVFDERIAVDVNHVNPTIVGKDWFDGTPCERYVNCGNPFCNRRILTSEENEDKYLRGCSHECRVHPRNRYVSKNELTQAEVIERLAAIGESLDQAATV</sequence>
<dbReference type="EC" id="1.14.-.-" evidence="1"/>
<dbReference type="EMBL" id="CP000920">
    <property type="protein sequence ID" value="ACO22141.1"/>
    <property type="molecule type" value="Genomic_DNA"/>
</dbReference>
<dbReference type="RefSeq" id="WP_001030032.1">
    <property type="nucleotide sequence ID" value="NC_012467.1"/>
</dbReference>
<dbReference type="SMR" id="C1CHZ8"/>
<dbReference type="KEGG" id="spp:SPP_0154"/>
<dbReference type="HOGENOM" id="CLU_038878_1_0_9"/>
<dbReference type="GO" id="GO:0016705">
    <property type="term" value="F:oxidoreductase activity, acting on paired donors, with incorporation or reduction of molecular oxygen"/>
    <property type="evidence" value="ECO:0007669"/>
    <property type="project" value="UniProtKB-UniRule"/>
</dbReference>
<dbReference type="GO" id="GO:0006400">
    <property type="term" value="P:tRNA modification"/>
    <property type="evidence" value="ECO:0007669"/>
    <property type="project" value="UniProtKB-UniRule"/>
</dbReference>
<dbReference type="CDD" id="cd01518">
    <property type="entry name" value="RHOD_YceA"/>
    <property type="match status" value="1"/>
</dbReference>
<dbReference type="Gene3D" id="3.30.70.100">
    <property type="match status" value="1"/>
</dbReference>
<dbReference type="Gene3D" id="3.40.250.10">
    <property type="entry name" value="Rhodanese-like domain"/>
    <property type="match status" value="1"/>
</dbReference>
<dbReference type="HAMAP" id="MF_00469">
    <property type="entry name" value="TrhO"/>
    <property type="match status" value="1"/>
</dbReference>
<dbReference type="InterPro" id="IPR001763">
    <property type="entry name" value="Rhodanese-like_dom"/>
</dbReference>
<dbReference type="InterPro" id="IPR036873">
    <property type="entry name" value="Rhodanese-like_dom_sf"/>
</dbReference>
<dbReference type="InterPro" id="IPR022111">
    <property type="entry name" value="Rhodanese_C"/>
</dbReference>
<dbReference type="InterPro" id="IPR020936">
    <property type="entry name" value="TrhO"/>
</dbReference>
<dbReference type="InterPro" id="IPR040503">
    <property type="entry name" value="TRHO_N"/>
</dbReference>
<dbReference type="NCBIfam" id="NF001135">
    <property type="entry name" value="PRK00142.1-3"/>
    <property type="match status" value="1"/>
</dbReference>
<dbReference type="NCBIfam" id="NF001137">
    <property type="entry name" value="PRK00142.1-5"/>
    <property type="match status" value="1"/>
</dbReference>
<dbReference type="PANTHER" id="PTHR43268:SF3">
    <property type="entry name" value="RHODANESE-LIKE DOMAIN-CONTAINING PROTEIN 7-RELATED"/>
    <property type="match status" value="1"/>
</dbReference>
<dbReference type="PANTHER" id="PTHR43268">
    <property type="entry name" value="THIOSULFATE SULFURTRANSFERASE/RHODANESE-LIKE DOMAIN-CONTAINING PROTEIN 2"/>
    <property type="match status" value="1"/>
</dbReference>
<dbReference type="Pfam" id="PF00581">
    <property type="entry name" value="Rhodanese"/>
    <property type="match status" value="1"/>
</dbReference>
<dbReference type="Pfam" id="PF12368">
    <property type="entry name" value="Rhodanese_C"/>
    <property type="match status" value="1"/>
</dbReference>
<dbReference type="Pfam" id="PF17773">
    <property type="entry name" value="UPF0176_N"/>
    <property type="match status" value="1"/>
</dbReference>
<dbReference type="SMART" id="SM00450">
    <property type="entry name" value="RHOD"/>
    <property type="match status" value="1"/>
</dbReference>
<dbReference type="SUPFAM" id="SSF52821">
    <property type="entry name" value="Rhodanese/Cell cycle control phosphatase"/>
    <property type="match status" value="1"/>
</dbReference>
<dbReference type="PROSITE" id="PS50206">
    <property type="entry name" value="RHODANESE_3"/>
    <property type="match status" value="1"/>
</dbReference>
<gene>
    <name evidence="1" type="primary">trhO</name>
    <name type="ordered locus">SPP_0154</name>
</gene>
<evidence type="ECO:0000255" key="1">
    <source>
        <dbReference type="HAMAP-Rule" id="MF_00469"/>
    </source>
</evidence>
<comment type="function">
    <text evidence="1">Catalyzes oxygen-dependent 5-hydroxyuridine (ho5U) modification at position 34 in tRNAs.</text>
</comment>
<comment type="catalytic activity">
    <reaction evidence="1">
        <text>uridine(34) in tRNA + AH2 + O2 = 5-hydroxyuridine(34) in tRNA + A + H2O</text>
        <dbReference type="Rhea" id="RHEA:64224"/>
        <dbReference type="Rhea" id="RHEA-COMP:11727"/>
        <dbReference type="Rhea" id="RHEA-COMP:13381"/>
        <dbReference type="ChEBI" id="CHEBI:13193"/>
        <dbReference type="ChEBI" id="CHEBI:15377"/>
        <dbReference type="ChEBI" id="CHEBI:15379"/>
        <dbReference type="ChEBI" id="CHEBI:17499"/>
        <dbReference type="ChEBI" id="CHEBI:65315"/>
        <dbReference type="ChEBI" id="CHEBI:136877"/>
    </reaction>
</comment>
<comment type="similarity">
    <text evidence="1">Belongs to the TrhO family.</text>
</comment>
<accession>C1CHZ8</accession>
<organism>
    <name type="scientific">Streptococcus pneumoniae (strain P1031)</name>
    <dbReference type="NCBI Taxonomy" id="488223"/>
    <lineage>
        <taxon>Bacteria</taxon>
        <taxon>Bacillati</taxon>
        <taxon>Bacillota</taxon>
        <taxon>Bacilli</taxon>
        <taxon>Lactobacillales</taxon>
        <taxon>Streptococcaceae</taxon>
        <taxon>Streptococcus</taxon>
    </lineage>
</organism>
<protein>
    <recommendedName>
        <fullName evidence="1">tRNA uridine(34) hydroxylase</fullName>
        <ecNumber evidence="1">1.14.-.-</ecNumber>
    </recommendedName>
    <alternativeName>
        <fullName evidence="1">tRNA hydroxylation protein O</fullName>
    </alternativeName>
</protein>
<reference key="1">
    <citation type="journal article" date="2010" name="Genome Biol.">
        <title>Structure and dynamics of the pan-genome of Streptococcus pneumoniae and closely related species.</title>
        <authorList>
            <person name="Donati C."/>
            <person name="Hiller N.L."/>
            <person name="Tettelin H."/>
            <person name="Muzzi A."/>
            <person name="Croucher N.J."/>
            <person name="Angiuoli S.V."/>
            <person name="Oggioni M."/>
            <person name="Dunning Hotopp J.C."/>
            <person name="Hu F.Z."/>
            <person name="Riley D.R."/>
            <person name="Covacci A."/>
            <person name="Mitchell T.J."/>
            <person name="Bentley S.D."/>
            <person name="Kilian M."/>
            <person name="Ehrlich G.D."/>
            <person name="Rappuoli R."/>
            <person name="Moxon E.R."/>
            <person name="Masignani V."/>
        </authorList>
    </citation>
    <scope>NUCLEOTIDE SEQUENCE [LARGE SCALE GENOMIC DNA]</scope>
    <source>
        <strain>P1031</strain>
    </source>
</reference>
<feature type="chain" id="PRO_1000135481" description="tRNA uridine(34) hydroxylase">
    <location>
        <begin position="1"/>
        <end position="328"/>
    </location>
</feature>
<feature type="domain" description="Rhodanese" evidence="1">
    <location>
        <begin position="130"/>
        <end position="224"/>
    </location>
</feature>
<feature type="active site" description="Cysteine persulfide intermediate" evidence="1">
    <location>
        <position position="184"/>
    </location>
</feature>
<proteinExistence type="inferred from homology"/>